<reference key="1">
    <citation type="journal article" date="1997" name="Nature">
        <title>The nucleotide sequence of Saccharomyces cerevisiae chromosome IV.</title>
        <authorList>
            <person name="Jacq C."/>
            <person name="Alt-Moerbe J."/>
            <person name="Andre B."/>
            <person name="Arnold W."/>
            <person name="Bahr A."/>
            <person name="Ballesta J.P.G."/>
            <person name="Bargues M."/>
            <person name="Baron L."/>
            <person name="Becker A."/>
            <person name="Biteau N."/>
            <person name="Bloecker H."/>
            <person name="Blugeon C."/>
            <person name="Boskovic J."/>
            <person name="Brandt P."/>
            <person name="Brueckner M."/>
            <person name="Buitrago M.J."/>
            <person name="Coster F."/>
            <person name="Delaveau T."/>
            <person name="del Rey F."/>
            <person name="Dujon B."/>
            <person name="Eide L.G."/>
            <person name="Garcia-Cantalejo J.M."/>
            <person name="Goffeau A."/>
            <person name="Gomez-Peris A."/>
            <person name="Granotier C."/>
            <person name="Hanemann V."/>
            <person name="Hankeln T."/>
            <person name="Hoheisel J.D."/>
            <person name="Jaeger W."/>
            <person name="Jimenez A."/>
            <person name="Jonniaux J.-L."/>
            <person name="Kraemer C."/>
            <person name="Kuester H."/>
            <person name="Laamanen P."/>
            <person name="Legros Y."/>
            <person name="Louis E.J."/>
            <person name="Moeller-Rieker S."/>
            <person name="Monnet A."/>
            <person name="Moro M."/>
            <person name="Mueller-Auer S."/>
            <person name="Nussbaumer B."/>
            <person name="Paricio N."/>
            <person name="Paulin L."/>
            <person name="Perea J."/>
            <person name="Perez-Alonso M."/>
            <person name="Perez-Ortin J.E."/>
            <person name="Pohl T.M."/>
            <person name="Prydz H."/>
            <person name="Purnelle B."/>
            <person name="Rasmussen S.W."/>
            <person name="Remacha M.A."/>
            <person name="Revuelta J.L."/>
            <person name="Rieger M."/>
            <person name="Salom D."/>
            <person name="Saluz H.P."/>
            <person name="Saiz J.E."/>
            <person name="Saren A.-M."/>
            <person name="Schaefer M."/>
            <person name="Scharfe M."/>
            <person name="Schmidt E.R."/>
            <person name="Schneider C."/>
            <person name="Scholler P."/>
            <person name="Schwarz S."/>
            <person name="Soler-Mira A."/>
            <person name="Urrestarazu L.A."/>
            <person name="Verhasselt P."/>
            <person name="Vissers S."/>
            <person name="Voet M."/>
            <person name="Volckaert G."/>
            <person name="Wagner G."/>
            <person name="Wambutt R."/>
            <person name="Wedler E."/>
            <person name="Wedler H."/>
            <person name="Woelfl S."/>
            <person name="Harris D.E."/>
            <person name="Bowman S."/>
            <person name="Brown D."/>
            <person name="Churcher C.M."/>
            <person name="Connor R."/>
            <person name="Dedman K."/>
            <person name="Gentles S."/>
            <person name="Hamlin N."/>
            <person name="Hunt S."/>
            <person name="Jones L."/>
            <person name="McDonald S."/>
            <person name="Murphy L.D."/>
            <person name="Niblett D."/>
            <person name="Odell C."/>
            <person name="Oliver K."/>
            <person name="Rajandream M.A."/>
            <person name="Richards C."/>
            <person name="Shore L."/>
            <person name="Walsh S.V."/>
            <person name="Barrell B.G."/>
            <person name="Dietrich F.S."/>
            <person name="Mulligan J.T."/>
            <person name="Allen E."/>
            <person name="Araujo R."/>
            <person name="Aviles E."/>
            <person name="Berno A."/>
            <person name="Carpenter J."/>
            <person name="Chen E."/>
            <person name="Cherry J.M."/>
            <person name="Chung E."/>
            <person name="Duncan M."/>
            <person name="Hunicke-Smith S."/>
            <person name="Hyman R.W."/>
            <person name="Komp C."/>
            <person name="Lashkari D."/>
            <person name="Lew H."/>
            <person name="Lin D."/>
            <person name="Mosedale D."/>
            <person name="Nakahara K."/>
            <person name="Namath A."/>
            <person name="Oefner P."/>
            <person name="Oh C."/>
            <person name="Petel F.X."/>
            <person name="Roberts D."/>
            <person name="Schramm S."/>
            <person name="Schroeder M."/>
            <person name="Shogren T."/>
            <person name="Shroff N."/>
            <person name="Winant A."/>
            <person name="Yelton M.A."/>
            <person name="Botstein D."/>
            <person name="Davis R.W."/>
            <person name="Johnston M."/>
            <person name="Andrews S."/>
            <person name="Brinkman R."/>
            <person name="Cooper J."/>
            <person name="Ding H."/>
            <person name="Du Z."/>
            <person name="Favello A."/>
            <person name="Fulton L."/>
            <person name="Gattung S."/>
            <person name="Greco T."/>
            <person name="Hallsworth K."/>
            <person name="Hawkins J."/>
            <person name="Hillier L.W."/>
            <person name="Jier M."/>
            <person name="Johnson D."/>
            <person name="Johnston L."/>
            <person name="Kirsten J."/>
            <person name="Kucaba T."/>
            <person name="Langston Y."/>
            <person name="Latreille P."/>
            <person name="Le T."/>
            <person name="Mardis E."/>
            <person name="Menezes S."/>
            <person name="Miller N."/>
            <person name="Nhan M."/>
            <person name="Pauley A."/>
            <person name="Peluso D."/>
            <person name="Rifkin L."/>
            <person name="Riles L."/>
            <person name="Taich A."/>
            <person name="Trevaskis E."/>
            <person name="Vignati D."/>
            <person name="Wilcox L."/>
            <person name="Wohldman P."/>
            <person name="Vaudin M."/>
            <person name="Wilson R."/>
            <person name="Waterston R."/>
            <person name="Albermann K."/>
            <person name="Hani J."/>
            <person name="Heumann K."/>
            <person name="Kleine K."/>
            <person name="Mewes H.-W."/>
            <person name="Zollner A."/>
            <person name="Zaccaria P."/>
        </authorList>
    </citation>
    <scope>NUCLEOTIDE SEQUENCE [LARGE SCALE GENOMIC DNA]</scope>
    <source>
        <strain>ATCC 204508 / S288c</strain>
    </source>
</reference>
<reference key="2">
    <citation type="journal article" date="2014" name="G3 (Bethesda)">
        <title>The reference genome sequence of Saccharomyces cerevisiae: Then and now.</title>
        <authorList>
            <person name="Engel S.R."/>
            <person name="Dietrich F.S."/>
            <person name="Fisk D.G."/>
            <person name="Binkley G."/>
            <person name="Balakrishnan R."/>
            <person name="Costanzo M.C."/>
            <person name="Dwight S.S."/>
            <person name="Hitz B.C."/>
            <person name="Karra K."/>
            <person name="Nash R.S."/>
            <person name="Weng S."/>
            <person name="Wong E.D."/>
            <person name="Lloyd P."/>
            <person name="Skrzypek M.S."/>
            <person name="Miyasato S.R."/>
            <person name="Simison M."/>
            <person name="Cherry J.M."/>
        </authorList>
    </citation>
    <scope>GENOME REANNOTATION</scope>
    <source>
        <strain>ATCC 204508 / S288c</strain>
    </source>
</reference>
<evidence type="ECO:0000255" key="1"/>
<evidence type="ECO:0000305" key="2"/>
<evidence type="ECO:0000305" key="3">
    <source>
    </source>
</evidence>
<keyword id="KW-0472">Membrane</keyword>
<keyword id="KW-0812">Transmembrane</keyword>
<keyword id="KW-1133">Transmembrane helix</keyword>
<protein>
    <recommendedName>
        <fullName>Putative uncharacterized protein YDR250C</fullName>
    </recommendedName>
</protein>
<gene>
    <name type="ordered locus">YDR250C</name>
</gene>
<sequence>MNGLVIIDMNNFAIVYANITFLFYYLLDFTLPFHVCRFLFHSSLENGPQHGQQGAATISRRAHCEKSHPSYYCTQKNMEANRQCYVNGTKT</sequence>
<proteinExistence type="uncertain"/>
<accession>Q03788</accession>
<name>YD250_YEAST</name>
<organism>
    <name type="scientific">Saccharomyces cerevisiae (strain ATCC 204508 / S288c)</name>
    <name type="common">Baker's yeast</name>
    <dbReference type="NCBI Taxonomy" id="559292"/>
    <lineage>
        <taxon>Eukaryota</taxon>
        <taxon>Fungi</taxon>
        <taxon>Dikarya</taxon>
        <taxon>Ascomycota</taxon>
        <taxon>Saccharomycotina</taxon>
        <taxon>Saccharomycetes</taxon>
        <taxon>Saccharomycetales</taxon>
        <taxon>Saccharomycetaceae</taxon>
        <taxon>Saccharomyces</taxon>
    </lineage>
</organism>
<dbReference type="EMBL" id="Z49701">
    <property type="protein sequence ID" value="CAA89736.1"/>
    <property type="molecule type" value="Genomic_DNA"/>
</dbReference>
<dbReference type="PIR" id="S54546">
    <property type="entry name" value="S54546"/>
</dbReference>
<dbReference type="DIP" id="DIP-5676N"/>
<dbReference type="STRING" id="4932.YDR250C"/>
<dbReference type="PaxDb" id="4932-YDR250C"/>
<dbReference type="EnsemblFungi" id="YDR250C_mRNA">
    <property type="protein sequence ID" value="YDR250C"/>
    <property type="gene ID" value="YDR250C"/>
</dbReference>
<dbReference type="AGR" id="SGD:S000002658"/>
<dbReference type="SGD" id="S000002658">
    <property type="gene designation" value="YDR250C"/>
</dbReference>
<dbReference type="HOGENOM" id="CLU_2428753_0_0_1"/>
<dbReference type="GO" id="GO:0016020">
    <property type="term" value="C:membrane"/>
    <property type="evidence" value="ECO:0007669"/>
    <property type="project" value="UniProtKB-SubCell"/>
</dbReference>
<comment type="subcellular location">
    <subcellularLocation>
        <location evidence="2">Membrane</location>
        <topology evidence="2">Single-pass membrane protein</topology>
    </subcellularLocation>
</comment>
<comment type="caution">
    <text evidence="3">Product of a dubious gene prediction unlikely to encode a functional protein. Because of that it is not part of the S.cerevisiae S288c complete/reference proteome set.</text>
</comment>
<feature type="chain" id="PRO_0000299878" description="Putative uncharacterized protein YDR250C">
    <location>
        <begin position="1"/>
        <end position="91"/>
    </location>
</feature>
<feature type="transmembrane region" description="Helical" evidence="1">
    <location>
        <begin position="12"/>
        <end position="34"/>
    </location>
</feature>